<proteinExistence type="evidence at transcript level"/>
<gene>
    <name evidence="4" type="primary">RXLR146</name>
</gene>
<organism>
    <name type="scientific">Plasmopara viticola</name>
    <name type="common">Downy mildew of grapevine</name>
    <name type="synonym">Botrytis viticola</name>
    <dbReference type="NCBI Taxonomy" id="143451"/>
    <lineage>
        <taxon>Eukaryota</taxon>
        <taxon>Sar</taxon>
        <taxon>Stramenopiles</taxon>
        <taxon>Oomycota</taxon>
        <taxon>Peronosporales</taxon>
        <taxon>Peronosporaceae</taxon>
        <taxon>Plasmopara</taxon>
    </lineage>
</organism>
<feature type="signal peptide" evidence="1">
    <location>
        <begin position="1"/>
        <end position="25"/>
    </location>
</feature>
<feature type="chain" id="PRO_0000447971" description="Secreted RxLR effector protein 146">
    <location>
        <begin position="26"/>
        <end position="265"/>
    </location>
</feature>
<feature type="short sequence motif" description="RxLR-dEER" evidence="6">
    <location>
        <begin position="32"/>
        <end position="50"/>
    </location>
</feature>
<feature type="glycosylation site" description="N-linked (GlcNAc...) asparagine" evidence="2">
    <location>
        <position position="71"/>
    </location>
</feature>
<feature type="glycosylation site" description="N-linked (GlcNAc...) asparagine" evidence="2">
    <location>
        <position position="148"/>
    </location>
</feature>
<sequence>MRYYTQVVAASLVATLAVVDSIVFADRGNKLRFLRQDGATVTRGGKGEERTGTAGSVESLTNLANLYFDSNLSSRVIKKMLEEHDGHQPVLAMIEKRFQERGAQKYMYLDEGLVTRETAEKKFIEWILEGKTKKQVKKEFGISSEPGNESAVELQESAIKAYGDWLEDLNGRSWDLENTAASKAFAYLYGKHVSRDWILGMFKAWATEGTPLKVAKNHLFKEPMRPFDMFQEENFVAYVTYAKMLREKIKSISPPRRDPVPTASN</sequence>
<evidence type="ECO:0000255" key="1"/>
<evidence type="ECO:0000255" key="2">
    <source>
        <dbReference type="PROSITE-ProRule" id="PRU00498"/>
    </source>
</evidence>
<evidence type="ECO:0000269" key="3">
    <source>
    </source>
</evidence>
<evidence type="ECO:0000303" key="4">
    <source>
    </source>
</evidence>
<evidence type="ECO:0000305" key="5"/>
<evidence type="ECO:0000305" key="6">
    <source>
    </source>
</evidence>
<protein>
    <recommendedName>
        <fullName evidence="4">Secreted RxLR effector protein 146</fullName>
    </recommendedName>
</protein>
<reference key="1">
    <citation type="journal article" date="2018" name="Front. Plant Sci.">
        <title>In planta functional analysis and subcellular localization of the oomycete pathogen Plasmopara viticola candidate RXLR effector repertoire.</title>
        <authorList>
            <person name="Liu Y."/>
            <person name="Lan X."/>
            <person name="Song S."/>
            <person name="Yin L."/>
            <person name="Dry I.B."/>
            <person name="Qu J."/>
            <person name="Xiang J."/>
            <person name="Lu J."/>
        </authorList>
    </citation>
    <scope>NUCLEOTIDE SEQUENCE [MRNA]</scope>
    <scope>DOMAIN</scope>
    <scope>FUNCTION</scope>
    <scope>SUBCELLULAR LOCATION</scope>
</reference>
<accession>P0CV61</accession>
<name>RL146_PLAVT</name>
<keyword id="KW-0325">Glycoprotein</keyword>
<keyword id="KW-1035">Host cytoplasm</keyword>
<keyword id="KW-1048">Host nucleus</keyword>
<keyword id="KW-0964">Secreted</keyword>
<keyword id="KW-0732">Signal</keyword>
<keyword id="KW-0843">Virulence</keyword>
<dbReference type="GlyCosmos" id="P0CV61">
    <property type="glycosylation" value="2 sites, No reported glycans"/>
</dbReference>
<dbReference type="GO" id="GO:0005576">
    <property type="term" value="C:extracellular region"/>
    <property type="evidence" value="ECO:0007669"/>
    <property type="project" value="UniProtKB-SubCell"/>
</dbReference>
<dbReference type="GO" id="GO:0030430">
    <property type="term" value="C:host cell cytoplasm"/>
    <property type="evidence" value="ECO:0007669"/>
    <property type="project" value="UniProtKB-SubCell"/>
</dbReference>
<dbReference type="GO" id="GO:0042025">
    <property type="term" value="C:host cell nucleus"/>
    <property type="evidence" value="ECO:0007669"/>
    <property type="project" value="UniProtKB-SubCell"/>
</dbReference>
<comment type="function">
    <text evidence="3">Secreted effector that completely suppresses the host cell death induced by cell death-inducing proteins.</text>
</comment>
<comment type="subcellular location">
    <subcellularLocation>
        <location evidence="3">Secreted</location>
    </subcellularLocation>
    <subcellularLocation>
        <location evidence="3">Host nucleus</location>
    </subcellularLocation>
    <subcellularLocation>
        <location evidence="3">Host cytoplasm</location>
    </subcellularLocation>
</comment>
<comment type="domain">
    <text evidence="6">The RxLR-dEER motif acts to carry the protein into the host cell cytoplasm through binding to cell surface phosphatidylinositol-3-phosphate.</text>
</comment>
<comment type="similarity">
    <text evidence="5">Belongs to the RxLR effector family.</text>
</comment>